<comment type="function">
    <text evidence="1">With CysN forms the ATP sulfurylase (ATPS) that catalyzes the adenylation of sulfate producing adenosine 5'-phosphosulfate (APS) and diphosphate, the first enzymatic step in sulfur assimilation pathway. APS synthesis involves the formation of a high-energy phosphoric-sulfuric acid anhydride bond driven by GTP hydrolysis by CysN coupled to ATP hydrolysis by CysD.</text>
</comment>
<comment type="catalytic activity">
    <reaction>
        <text>sulfate + ATP + H(+) = adenosine 5'-phosphosulfate + diphosphate</text>
        <dbReference type="Rhea" id="RHEA:18133"/>
        <dbReference type="ChEBI" id="CHEBI:15378"/>
        <dbReference type="ChEBI" id="CHEBI:16189"/>
        <dbReference type="ChEBI" id="CHEBI:30616"/>
        <dbReference type="ChEBI" id="CHEBI:33019"/>
        <dbReference type="ChEBI" id="CHEBI:58243"/>
        <dbReference type="EC" id="2.7.7.4"/>
    </reaction>
</comment>
<comment type="pathway">
    <text>Sulfur metabolism; hydrogen sulfide biosynthesis; sulfite from sulfate: step 1/3.</text>
</comment>
<comment type="subunit">
    <text evidence="1">Heterodimer composed of CysD, the smaller subunit, and CysN.</text>
</comment>
<comment type="similarity">
    <text evidence="3">Belongs to the PAPS reductase family. CysD subfamily.</text>
</comment>
<feature type="chain" id="PRO_0000100672" description="Sulfate adenylyltransferase subunit 2">
    <location>
        <begin position="1"/>
        <end position="317"/>
    </location>
</feature>
<feature type="region of interest" description="Disordered" evidence="2">
    <location>
        <begin position="1"/>
        <end position="21"/>
    </location>
</feature>
<feature type="region of interest" description="Disordered" evidence="2">
    <location>
        <begin position="295"/>
        <end position="317"/>
    </location>
</feature>
<feature type="compositionally biased region" description="Basic and acidic residues" evidence="2">
    <location>
        <begin position="1"/>
        <end position="10"/>
    </location>
</feature>
<feature type="sequence conflict" description="In Ref. 1; AAD55760." evidence="3" ref="1">
    <original>R</original>
    <variation>A</variation>
    <location>
        <position position="260"/>
    </location>
</feature>
<keyword id="KW-0067">ATP-binding</keyword>
<keyword id="KW-0547">Nucleotide-binding</keyword>
<keyword id="KW-0548">Nucleotidyltransferase</keyword>
<keyword id="KW-1185">Reference proteome</keyword>
<keyword id="KW-0808">Transferase</keyword>
<proteinExistence type="inferred from homology"/>
<evidence type="ECO:0000250" key="1"/>
<evidence type="ECO:0000256" key="2">
    <source>
        <dbReference type="SAM" id="MobiDB-lite"/>
    </source>
</evidence>
<evidence type="ECO:0000305" key="3"/>
<accession>P56892</accession>
<organism>
    <name type="scientific">Rhizobium meliloti (strain 1021)</name>
    <name type="common">Ensifer meliloti</name>
    <name type="synonym">Sinorhizobium meliloti</name>
    <dbReference type="NCBI Taxonomy" id="266834"/>
    <lineage>
        <taxon>Bacteria</taxon>
        <taxon>Pseudomonadati</taxon>
        <taxon>Pseudomonadota</taxon>
        <taxon>Alphaproteobacteria</taxon>
        <taxon>Hyphomicrobiales</taxon>
        <taxon>Rhizobiaceae</taxon>
        <taxon>Sinorhizobium/Ensifer group</taxon>
        <taxon>Sinorhizobium</taxon>
    </lineage>
</organism>
<sequence>MPHTLPETELHNPQSTKPPLDPHLKALENEAIHIFREVAAEFERPVMLYSIGKDSSVLLHLARKAFYPGRIPFPLLHVDTGWKFREMIAFRDEMVAKYDLDLVAHTNPRGAAENVTPFTHGSALYTDIMKTEALRQALDAGQYDAAFGGARRDEEASRAKERIYSFRTPDHRWDPRNQRPELWNVYNGMIRKGESVRAFPLSNWTEVDIWRYIQAEDIPIVPLYFAKKRPVVERDGMLILAEDPRLELLPGEVKREEVIRFRTLGCFPLTGAIRSEADTLDDIIAELETATVSERQGRAIDRDQAGSMEKKKREGYF</sequence>
<protein>
    <recommendedName>
        <fullName>Sulfate adenylyltransferase subunit 2</fullName>
        <ecNumber>2.7.7.4</ecNumber>
    </recommendedName>
    <alternativeName>
        <fullName>ATP-sulfurylase small subunit</fullName>
    </alternativeName>
    <alternativeName>
        <fullName>Sulfate adenylate transferase</fullName>
        <shortName>SAT</shortName>
    </alternativeName>
</protein>
<dbReference type="EC" id="2.7.7.4"/>
<dbReference type="EMBL" id="AF158023">
    <property type="protein sequence ID" value="AAD55760.1"/>
    <property type="molecule type" value="Genomic_DNA"/>
</dbReference>
<dbReference type="EMBL" id="AL591688">
    <property type="protein sequence ID" value="CAC45515.1"/>
    <property type="molecule type" value="Genomic_DNA"/>
</dbReference>
<dbReference type="RefSeq" id="NP_385049.1">
    <property type="nucleotide sequence ID" value="NC_003047.1"/>
</dbReference>
<dbReference type="RefSeq" id="WP_003536273.1">
    <property type="nucleotide sequence ID" value="NC_003047.1"/>
</dbReference>
<dbReference type="SMR" id="P56892"/>
<dbReference type="EnsemblBacteria" id="CAC45515">
    <property type="protein sequence ID" value="CAC45515"/>
    <property type="gene ID" value="SMc00091"/>
</dbReference>
<dbReference type="GeneID" id="89575265"/>
<dbReference type="KEGG" id="sme:SMc00091"/>
<dbReference type="PATRIC" id="fig|266834.11.peg.2341"/>
<dbReference type="eggNOG" id="COG0175">
    <property type="taxonomic scope" value="Bacteria"/>
</dbReference>
<dbReference type="HOGENOM" id="CLU_043026_0_0_5"/>
<dbReference type="OrthoDB" id="9772604at2"/>
<dbReference type="BioCyc" id="MetaCyc:MONOMER-16112"/>
<dbReference type="UniPathway" id="UPA00140">
    <property type="reaction ID" value="UER00204"/>
</dbReference>
<dbReference type="Proteomes" id="UP000001976">
    <property type="component" value="Chromosome"/>
</dbReference>
<dbReference type="GO" id="GO:0005524">
    <property type="term" value="F:ATP binding"/>
    <property type="evidence" value="ECO:0007669"/>
    <property type="project" value="UniProtKB-KW"/>
</dbReference>
<dbReference type="GO" id="GO:0004781">
    <property type="term" value="F:sulfate adenylyltransferase (ATP) activity"/>
    <property type="evidence" value="ECO:0007669"/>
    <property type="project" value="UniProtKB-UniRule"/>
</dbReference>
<dbReference type="GO" id="GO:0070814">
    <property type="term" value="P:hydrogen sulfide biosynthetic process"/>
    <property type="evidence" value="ECO:0007669"/>
    <property type="project" value="UniProtKB-UniRule"/>
</dbReference>
<dbReference type="GO" id="GO:0000103">
    <property type="term" value="P:sulfate assimilation"/>
    <property type="evidence" value="ECO:0007669"/>
    <property type="project" value="UniProtKB-UniRule"/>
</dbReference>
<dbReference type="FunFam" id="3.40.50.620:FF:000002">
    <property type="entry name" value="Sulfate adenylyltransferase subunit 2"/>
    <property type="match status" value="1"/>
</dbReference>
<dbReference type="Gene3D" id="3.40.50.620">
    <property type="entry name" value="HUPs"/>
    <property type="match status" value="1"/>
</dbReference>
<dbReference type="HAMAP" id="MF_00064">
    <property type="entry name" value="Sulf_adenylyltr_sub2"/>
    <property type="match status" value="1"/>
</dbReference>
<dbReference type="InterPro" id="IPR002500">
    <property type="entry name" value="PAPS_reduct_dom"/>
</dbReference>
<dbReference type="InterPro" id="IPR014729">
    <property type="entry name" value="Rossmann-like_a/b/a_fold"/>
</dbReference>
<dbReference type="InterPro" id="IPR011784">
    <property type="entry name" value="SO4_adenylTrfase_ssu"/>
</dbReference>
<dbReference type="InterPro" id="IPR050128">
    <property type="entry name" value="Sulfate_adenylyltrnsfr_sub2"/>
</dbReference>
<dbReference type="NCBIfam" id="TIGR02039">
    <property type="entry name" value="CysD"/>
    <property type="match status" value="1"/>
</dbReference>
<dbReference type="NCBIfam" id="NF003587">
    <property type="entry name" value="PRK05253.1"/>
    <property type="match status" value="1"/>
</dbReference>
<dbReference type="NCBIfam" id="NF009214">
    <property type="entry name" value="PRK12563.1"/>
    <property type="match status" value="1"/>
</dbReference>
<dbReference type="PANTHER" id="PTHR43196">
    <property type="entry name" value="SULFATE ADENYLYLTRANSFERASE SUBUNIT 2"/>
    <property type="match status" value="1"/>
</dbReference>
<dbReference type="PANTHER" id="PTHR43196:SF1">
    <property type="entry name" value="SULFATE ADENYLYLTRANSFERASE SUBUNIT 2"/>
    <property type="match status" value="1"/>
</dbReference>
<dbReference type="Pfam" id="PF01507">
    <property type="entry name" value="PAPS_reduct"/>
    <property type="match status" value="1"/>
</dbReference>
<dbReference type="PIRSF" id="PIRSF002936">
    <property type="entry name" value="CysDAde_trans"/>
    <property type="match status" value="1"/>
</dbReference>
<dbReference type="SUPFAM" id="SSF52402">
    <property type="entry name" value="Adenine nucleotide alpha hydrolases-like"/>
    <property type="match status" value="1"/>
</dbReference>
<gene>
    <name type="primary">cysD</name>
    <name type="ordered locus">R00943</name>
    <name type="ORF">SMc00091</name>
</gene>
<reference key="1">
    <citation type="journal article" date="1999" name="J. Bacteriol.">
        <title>Reduction of adenosine-5'-phosphosulfate instead of 3'-phosphoadenosine-5'-phosphosulfate in cysteine biosynthesis by Rhizobium meliloti and other members of the family Rhizobiaceae.</title>
        <authorList>
            <person name="Abola A.P."/>
            <person name="Willits M.G."/>
            <person name="Wang R.C."/>
            <person name="Long S.R."/>
        </authorList>
    </citation>
    <scope>NUCLEOTIDE SEQUENCE [GENOMIC DNA]</scope>
    <source>
        <strain>1021</strain>
    </source>
</reference>
<reference key="2">
    <citation type="journal article" date="2001" name="Proc. Natl. Acad. Sci. U.S.A.">
        <title>Analysis of the chromosome sequence of the legume symbiont Sinorhizobium meliloti strain 1021.</title>
        <authorList>
            <person name="Capela D."/>
            <person name="Barloy-Hubler F."/>
            <person name="Gouzy J."/>
            <person name="Bothe G."/>
            <person name="Ampe F."/>
            <person name="Batut J."/>
            <person name="Boistard P."/>
            <person name="Becker A."/>
            <person name="Boutry M."/>
            <person name="Cadieu E."/>
            <person name="Dreano S."/>
            <person name="Gloux S."/>
            <person name="Godrie T."/>
            <person name="Goffeau A."/>
            <person name="Kahn D."/>
            <person name="Kiss E."/>
            <person name="Lelaure V."/>
            <person name="Masuy D."/>
            <person name="Pohl T."/>
            <person name="Portetelle D."/>
            <person name="Puehler A."/>
            <person name="Purnelle B."/>
            <person name="Ramsperger U."/>
            <person name="Renard C."/>
            <person name="Thebault P."/>
            <person name="Vandenbol M."/>
            <person name="Weidner S."/>
            <person name="Galibert F."/>
        </authorList>
    </citation>
    <scope>NUCLEOTIDE SEQUENCE [LARGE SCALE GENOMIC DNA]</scope>
    <source>
        <strain>1021</strain>
    </source>
</reference>
<reference key="3">
    <citation type="journal article" date="2001" name="Science">
        <title>The composite genome of the legume symbiont Sinorhizobium meliloti.</title>
        <authorList>
            <person name="Galibert F."/>
            <person name="Finan T.M."/>
            <person name="Long S.R."/>
            <person name="Puehler A."/>
            <person name="Abola P."/>
            <person name="Ampe F."/>
            <person name="Barloy-Hubler F."/>
            <person name="Barnett M.J."/>
            <person name="Becker A."/>
            <person name="Boistard P."/>
            <person name="Bothe G."/>
            <person name="Boutry M."/>
            <person name="Bowser L."/>
            <person name="Buhrmester J."/>
            <person name="Cadieu E."/>
            <person name="Capela D."/>
            <person name="Chain P."/>
            <person name="Cowie A."/>
            <person name="Davis R.W."/>
            <person name="Dreano S."/>
            <person name="Federspiel N.A."/>
            <person name="Fisher R.F."/>
            <person name="Gloux S."/>
            <person name="Godrie T."/>
            <person name="Goffeau A."/>
            <person name="Golding B."/>
            <person name="Gouzy J."/>
            <person name="Gurjal M."/>
            <person name="Hernandez-Lucas I."/>
            <person name="Hong A."/>
            <person name="Huizar L."/>
            <person name="Hyman R.W."/>
            <person name="Jones T."/>
            <person name="Kahn D."/>
            <person name="Kahn M.L."/>
            <person name="Kalman S."/>
            <person name="Keating D.H."/>
            <person name="Kiss E."/>
            <person name="Komp C."/>
            <person name="Lelaure V."/>
            <person name="Masuy D."/>
            <person name="Palm C."/>
            <person name="Peck M.C."/>
            <person name="Pohl T.M."/>
            <person name="Portetelle D."/>
            <person name="Purnelle B."/>
            <person name="Ramsperger U."/>
            <person name="Surzycki R."/>
            <person name="Thebault P."/>
            <person name="Vandenbol M."/>
            <person name="Vorhoelter F.J."/>
            <person name="Weidner S."/>
            <person name="Wells D.H."/>
            <person name="Wong K."/>
            <person name="Yeh K.-C."/>
            <person name="Batut J."/>
        </authorList>
    </citation>
    <scope>NUCLEOTIDE SEQUENCE [LARGE SCALE GENOMIC DNA]</scope>
    <source>
        <strain>1021</strain>
    </source>
</reference>
<name>CYSD_RHIME</name>